<dbReference type="EMBL" id="DP000011">
    <property type="protein sequence ID" value="ABA97109.1"/>
    <property type="molecule type" value="Genomic_DNA"/>
</dbReference>
<dbReference type="EMBL" id="DP000011">
    <property type="protein sequence ID" value="ABA97110.1"/>
    <property type="molecule type" value="Genomic_DNA"/>
</dbReference>
<dbReference type="EMBL" id="DP000011">
    <property type="protein sequence ID" value="ABA97111.1"/>
    <property type="molecule type" value="Genomic_DNA"/>
</dbReference>
<dbReference type="EMBL" id="AP008218">
    <property type="protein sequence ID" value="BAF29588.1"/>
    <property type="molecule type" value="Genomic_DNA"/>
</dbReference>
<dbReference type="EMBL" id="AP014968">
    <property type="protein sequence ID" value="BAT16696.1"/>
    <property type="molecule type" value="Genomic_DNA"/>
</dbReference>
<dbReference type="EMBL" id="AP014968">
    <property type="protein sequence ID" value="BAT16697.1"/>
    <property type="molecule type" value="Genomic_DNA"/>
</dbReference>
<dbReference type="EMBL" id="AK111498">
    <property type="status" value="NOT_ANNOTATED_CDS"/>
    <property type="molecule type" value="mRNA"/>
</dbReference>
<dbReference type="EMBL" id="AK121774">
    <property type="status" value="NOT_ANNOTATED_CDS"/>
    <property type="molecule type" value="mRNA"/>
</dbReference>
<dbReference type="RefSeq" id="XP_015620302.1">
    <molecule id="Q2QTY2-1"/>
    <property type="nucleotide sequence ID" value="XM_015764816.1"/>
</dbReference>
<dbReference type="RefSeq" id="XP_015620303.1">
    <property type="nucleotide sequence ID" value="XM_015764817.1"/>
</dbReference>
<dbReference type="RefSeq" id="XP_015620308.1">
    <property type="nucleotide sequence ID" value="XM_015764822.1"/>
</dbReference>
<dbReference type="STRING" id="39947.Q2QTY2"/>
<dbReference type="iPTMnet" id="Q2QTY2"/>
<dbReference type="PaxDb" id="39947-Q2QTY2"/>
<dbReference type="EnsemblPlants" id="Os12t0278800-01">
    <molecule id="Q2QTY2-1"/>
    <property type="protein sequence ID" value="Os12t0278800-01"/>
    <property type="gene ID" value="Os12g0278800"/>
</dbReference>
<dbReference type="EnsemblPlants" id="Os12t0278800-03">
    <molecule id="Q2QTY2-1"/>
    <property type="protein sequence ID" value="Os12t0278800-03"/>
    <property type="gene ID" value="Os12g0278800"/>
</dbReference>
<dbReference type="Gramene" id="Os12t0278800-01">
    <molecule id="Q2QTY2-1"/>
    <property type="protein sequence ID" value="Os12t0278800-01"/>
    <property type="gene ID" value="Os12g0278800"/>
</dbReference>
<dbReference type="Gramene" id="Os12t0278800-03">
    <molecule id="Q2QTY2-1"/>
    <property type="protein sequence ID" value="Os12t0278800-03"/>
    <property type="gene ID" value="Os12g0278800"/>
</dbReference>
<dbReference type="KEGG" id="dosa:Os12g0278800"/>
<dbReference type="eggNOG" id="KOG1677">
    <property type="taxonomic scope" value="Eukaryota"/>
</dbReference>
<dbReference type="HOGENOM" id="CLU_033292_3_0_1"/>
<dbReference type="InParanoid" id="Q2QTY2"/>
<dbReference type="OMA" id="NASIWPD"/>
<dbReference type="OrthoDB" id="777004at2759"/>
<dbReference type="Proteomes" id="UP000000763">
    <property type="component" value="Chromosome 12"/>
</dbReference>
<dbReference type="Proteomes" id="UP000059680">
    <property type="component" value="Chromosome 12"/>
</dbReference>
<dbReference type="ExpressionAtlas" id="Q2QTY2">
    <property type="expression patterns" value="baseline and differential"/>
</dbReference>
<dbReference type="GO" id="GO:0003677">
    <property type="term" value="F:DNA binding"/>
    <property type="evidence" value="ECO:0007669"/>
    <property type="project" value="UniProtKB-KW"/>
</dbReference>
<dbReference type="GO" id="GO:0003729">
    <property type="term" value="F:mRNA binding"/>
    <property type="evidence" value="ECO:0000318"/>
    <property type="project" value="GO_Central"/>
</dbReference>
<dbReference type="GO" id="GO:0008270">
    <property type="term" value="F:zinc ion binding"/>
    <property type="evidence" value="ECO:0007669"/>
    <property type="project" value="UniProtKB-KW"/>
</dbReference>
<dbReference type="Gene3D" id="4.10.1000.10">
    <property type="entry name" value="Zinc finger, CCCH-type"/>
    <property type="match status" value="3"/>
</dbReference>
<dbReference type="InterPro" id="IPR050974">
    <property type="entry name" value="Plant_ZF_CCCH"/>
</dbReference>
<dbReference type="InterPro" id="IPR000571">
    <property type="entry name" value="Znf_CCCH"/>
</dbReference>
<dbReference type="InterPro" id="IPR036855">
    <property type="entry name" value="Znf_CCCH_sf"/>
</dbReference>
<dbReference type="PANTHER" id="PTHR12506">
    <property type="entry name" value="PROTEIN PHOSPHATASE RELATED"/>
    <property type="match status" value="1"/>
</dbReference>
<dbReference type="PANTHER" id="PTHR12506:SF20">
    <property type="entry name" value="ZINC FINGER CCCH DOMAIN-CONTAINING PROTEIN 67"/>
    <property type="match status" value="1"/>
</dbReference>
<dbReference type="Pfam" id="PF00642">
    <property type="entry name" value="zf-CCCH"/>
    <property type="match status" value="4"/>
</dbReference>
<dbReference type="Pfam" id="PF14608">
    <property type="entry name" value="zf-CCCH_2"/>
    <property type="match status" value="1"/>
</dbReference>
<dbReference type="SMART" id="SM00356">
    <property type="entry name" value="ZnF_C3H1"/>
    <property type="match status" value="5"/>
</dbReference>
<dbReference type="SUPFAM" id="SSF90229">
    <property type="entry name" value="CCCH zinc finger"/>
    <property type="match status" value="2"/>
</dbReference>
<dbReference type="PROSITE" id="PS50103">
    <property type="entry name" value="ZF_C3H1"/>
    <property type="match status" value="5"/>
</dbReference>
<keyword id="KW-0025">Alternative splicing</keyword>
<keyword id="KW-0238">DNA-binding</keyword>
<keyword id="KW-0479">Metal-binding</keyword>
<keyword id="KW-1185">Reference proteome</keyword>
<keyword id="KW-0677">Repeat</keyword>
<keyword id="KW-0862">Zinc</keyword>
<keyword id="KW-0863">Zinc-finger</keyword>
<evidence type="ECO:0000255" key="1">
    <source>
        <dbReference type="PROSITE-ProRule" id="PRU00723"/>
    </source>
</evidence>
<evidence type="ECO:0000256" key="2">
    <source>
        <dbReference type="SAM" id="MobiDB-lite"/>
    </source>
</evidence>
<evidence type="ECO:0000303" key="3">
    <source>
    </source>
</evidence>
<evidence type="ECO:0000305" key="4"/>
<name>C3H65_ORYSJ</name>
<protein>
    <recommendedName>
        <fullName>Zinc finger CCCH domain-containing protein 65</fullName>
        <shortName>OsC3H65</shortName>
    </recommendedName>
</protein>
<comment type="alternative products">
    <event type="alternative splicing"/>
    <isoform>
        <id>Q2QTY2-1</id>
        <name>1</name>
        <sequence type="displayed"/>
    </isoform>
    <isoform>
        <id>Q2QTY2-2</id>
        <name>2</name>
        <sequence type="described" ref="VSP_035024"/>
    </isoform>
    <isoform>
        <id>Q2QTY2-3</id>
        <name>3</name>
        <sequence type="described" ref="VSP_035024 VSP_035025"/>
    </isoform>
</comment>
<comment type="miscellaneous">
    <molecule>Isoform 2</molecule>
    <text evidence="4">May be due to a competing acceptor splice site.</text>
</comment>
<gene>
    <name type="ordered locus">Os12g0278800</name>
    <name type="ordered locus">LOC_Os12g18120</name>
</gene>
<sequence length="529" mass="57306">MADADARAPPKSDPGATPIGSISPSSAAPAAGEDEVEVEVEVEEQLAGLAIADQGEELLLPKPTGWEDGPVVVAGDEVSGGEKLPGEVAAAVGVEGAAADSRPRFPRRPGEPDCTYYVKFGSCRFGMKCKFNHPARKKKSRVKGSNGGSGSGGSNSSSNKASSPDDEQQAPKEEYGSYVPDISPEVDSLGFADKGSASNLENFKKYSYEIIDVKKGRVEPKELKVAKEKRKEFISEGSSQEECKYYSTPGGCKFGKACKYLHRDGKEGKTDAEKVDLNFLGLPLRPGEKECPYYMRTGSCKYATNCKFHHPDPSNVASKDPQLEHENGDAPQQDVQGSSSQPNASIWPDQRTVNEHHVPFIAPSPSYSAGMLPPQGMYPPPEWNGYHQVPLNPYYPPGVPFQHFPAAPINHPMYKAPEIPGHQQVPSEEYPERPGQPECQHFVKSGFCKFRMKCKYHHPRSPVPPAGALSPLGLPIKPDQPVCTYYGRYGVCKFGPACAYNHPFNFSPVPAAGPPLLPAQYPTPGNYTL</sequence>
<organism>
    <name type="scientific">Oryza sativa subsp. japonica</name>
    <name type="common">Rice</name>
    <dbReference type="NCBI Taxonomy" id="39947"/>
    <lineage>
        <taxon>Eukaryota</taxon>
        <taxon>Viridiplantae</taxon>
        <taxon>Streptophyta</taxon>
        <taxon>Embryophyta</taxon>
        <taxon>Tracheophyta</taxon>
        <taxon>Spermatophyta</taxon>
        <taxon>Magnoliopsida</taxon>
        <taxon>Liliopsida</taxon>
        <taxon>Poales</taxon>
        <taxon>Poaceae</taxon>
        <taxon>BOP clade</taxon>
        <taxon>Oryzoideae</taxon>
        <taxon>Oryzeae</taxon>
        <taxon>Oryzinae</taxon>
        <taxon>Oryza</taxon>
        <taxon>Oryza sativa</taxon>
    </lineage>
</organism>
<feature type="chain" id="PRO_0000346856" description="Zinc finger CCCH domain-containing protein 65">
    <location>
        <begin position="1"/>
        <end position="529"/>
    </location>
</feature>
<feature type="zinc finger region" description="C3H1-type 1" evidence="1">
    <location>
        <begin position="108"/>
        <end position="136"/>
    </location>
</feature>
<feature type="zinc finger region" description="C3H1-type 2" evidence="1">
    <location>
        <begin position="237"/>
        <end position="265"/>
    </location>
</feature>
<feature type="zinc finger region" description="C3H1-type 3" evidence="1">
    <location>
        <begin position="285"/>
        <end position="313"/>
    </location>
</feature>
<feature type="zinc finger region" description="C3H1-type 4" evidence="1">
    <location>
        <begin position="433"/>
        <end position="461"/>
    </location>
</feature>
<feature type="zinc finger region" description="C3H1-type 5" evidence="1">
    <location>
        <begin position="477"/>
        <end position="505"/>
    </location>
</feature>
<feature type="region of interest" description="Disordered" evidence="2">
    <location>
        <begin position="1"/>
        <end position="36"/>
    </location>
</feature>
<feature type="region of interest" description="Disordered" evidence="2">
    <location>
        <begin position="134"/>
        <end position="179"/>
    </location>
</feature>
<feature type="region of interest" description="Disordered" evidence="2">
    <location>
        <begin position="313"/>
        <end position="347"/>
    </location>
</feature>
<feature type="compositionally biased region" description="Basic and acidic residues" evidence="2">
    <location>
        <begin position="1"/>
        <end position="10"/>
    </location>
</feature>
<feature type="compositionally biased region" description="Low complexity" evidence="2">
    <location>
        <begin position="14"/>
        <end position="31"/>
    </location>
</feature>
<feature type="compositionally biased region" description="Polar residues" evidence="2">
    <location>
        <begin position="333"/>
        <end position="344"/>
    </location>
</feature>
<feature type="splice variant" id="VSP_035024" description="In isoform 2 and isoform 3." evidence="3">
    <location>
        <position position="169"/>
    </location>
</feature>
<feature type="splice variant" id="VSP_035025" description="In isoform 3." evidence="4">
    <location>
        <begin position="190"/>
        <end position="209"/>
    </location>
</feature>
<feature type="sequence conflict" description="In Ref. 5; AK121774." evidence="4" ref="5">
    <location>
        <position position="135"/>
    </location>
</feature>
<feature type="sequence conflict" description="In Ref. 5; AK121774." evidence="4" ref="5">
    <original>E</original>
    <variation>V</variation>
    <location>
        <position position="167"/>
    </location>
</feature>
<proteinExistence type="evidence at transcript level"/>
<accession>Q2QTY2</accession>
<accession>A0A0P0Y948</accession>
<accession>Q2QTY3</accession>
<accession>Q2QTY4</accession>
<reference key="1">
    <citation type="journal article" date="2005" name="BMC Biol.">
        <title>The sequence of rice chromosomes 11 and 12, rich in disease resistance genes and recent gene duplications.</title>
        <authorList>
            <consortium name="The rice chromosomes 11 and 12 sequencing consortia"/>
        </authorList>
    </citation>
    <scope>NUCLEOTIDE SEQUENCE [LARGE SCALE GENOMIC DNA]</scope>
    <source>
        <strain>cv. Nipponbare</strain>
    </source>
</reference>
<reference key="2">
    <citation type="journal article" date="2005" name="Nature">
        <title>The map-based sequence of the rice genome.</title>
        <authorList>
            <consortium name="International rice genome sequencing project (IRGSP)"/>
        </authorList>
    </citation>
    <scope>NUCLEOTIDE SEQUENCE [LARGE SCALE GENOMIC DNA]</scope>
    <source>
        <strain>cv. Nipponbare</strain>
    </source>
</reference>
<reference key="3">
    <citation type="journal article" date="2008" name="Nucleic Acids Res.">
        <title>The rice annotation project database (RAP-DB): 2008 update.</title>
        <authorList>
            <consortium name="The rice annotation project (RAP)"/>
        </authorList>
    </citation>
    <scope>GENOME REANNOTATION</scope>
    <source>
        <strain>cv. Nipponbare</strain>
    </source>
</reference>
<reference key="4">
    <citation type="journal article" date="2013" name="Rice">
        <title>Improvement of the Oryza sativa Nipponbare reference genome using next generation sequence and optical map data.</title>
        <authorList>
            <person name="Kawahara Y."/>
            <person name="de la Bastide M."/>
            <person name="Hamilton J.P."/>
            <person name="Kanamori H."/>
            <person name="McCombie W.R."/>
            <person name="Ouyang S."/>
            <person name="Schwartz D.C."/>
            <person name="Tanaka T."/>
            <person name="Wu J."/>
            <person name="Zhou S."/>
            <person name="Childs K.L."/>
            <person name="Davidson R.M."/>
            <person name="Lin H."/>
            <person name="Quesada-Ocampo L."/>
            <person name="Vaillancourt B."/>
            <person name="Sakai H."/>
            <person name="Lee S.S."/>
            <person name="Kim J."/>
            <person name="Numa H."/>
            <person name="Itoh T."/>
            <person name="Buell C.R."/>
            <person name="Matsumoto T."/>
        </authorList>
    </citation>
    <scope>GENOME REANNOTATION</scope>
    <source>
        <strain>cv. Nipponbare</strain>
    </source>
</reference>
<reference key="5">
    <citation type="journal article" date="2003" name="Science">
        <title>Collection, mapping, and annotation of over 28,000 cDNA clones from japonica rice.</title>
        <authorList>
            <consortium name="The rice full-length cDNA consortium"/>
        </authorList>
    </citation>
    <scope>NUCLEOTIDE SEQUENCE [LARGE SCALE MRNA] (ISOFORMS 1 AND 2)</scope>
    <source>
        <strain>cv. Nipponbare</strain>
    </source>
</reference>
<reference key="6">
    <citation type="journal article" date="2008" name="BMC Genomics">
        <title>Genome-wide analysis of CCCH zinc finger family in Arabidopsis and rice.</title>
        <authorList>
            <person name="Wang D."/>
            <person name="Guo Y."/>
            <person name="Wu C."/>
            <person name="Yang G."/>
            <person name="Li Y."/>
            <person name="Zheng C."/>
        </authorList>
    </citation>
    <scope>NOMENCLATURE</scope>
</reference>